<sequence>MNSLLIMGYTSFDLGIFNEKDIKVSIIKKTIRRKLINFLEEGLRWVIFTGNLGFEYWALEVAKELQTDYEFQIGTIFPFETHGQNWNENNQIKLASFKQVDFVKYAFEAYENPGQFRQYNEFLLENTEGSFVFYDEENETKLKNMVEKMKQSSNYEVYLLNFEDLQEIFEEMND</sequence>
<reference key="1">
    <citation type="journal article" date="2006" name="Proc. Natl. Acad. Sci. U.S.A.">
        <title>Comparative genomics of the lactic acid bacteria.</title>
        <authorList>
            <person name="Makarova K.S."/>
            <person name="Slesarev A."/>
            <person name="Wolf Y.I."/>
            <person name="Sorokin A."/>
            <person name="Mirkin B."/>
            <person name="Koonin E.V."/>
            <person name="Pavlov A."/>
            <person name="Pavlova N."/>
            <person name="Karamychev V."/>
            <person name="Polouchine N."/>
            <person name="Shakhova V."/>
            <person name="Grigoriev I."/>
            <person name="Lou Y."/>
            <person name="Rohksar D."/>
            <person name="Lucas S."/>
            <person name="Huang K."/>
            <person name="Goodstein D.M."/>
            <person name="Hawkins T."/>
            <person name="Plengvidhya V."/>
            <person name="Welker D."/>
            <person name="Hughes J."/>
            <person name="Goh Y."/>
            <person name="Benson A."/>
            <person name="Baldwin K."/>
            <person name="Lee J.-H."/>
            <person name="Diaz-Muniz I."/>
            <person name="Dosti B."/>
            <person name="Smeianov V."/>
            <person name="Wechter W."/>
            <person name="Barabote R."/>
            <person name="Lorca G."/>
            <person name="Altermann E."/>
            <person name="Barrangou R."/>
            <person name="Ganesan B."/>
            <person name="Xie Y."/>
            <person name="Rawsthorne H."/>
            <person name="Tamir D."/>
            <person name="Parker C."/>
            <person name="Breidt F."/>
            <person name="Broadbent J.R."/>
            <person name="Hutkins R."/>
            <person name="O'Sullivan D."/>
            <person name="Steele J."/>
            <person name="Unlu G."/>
            <person name="Saier M.H. Jr."/>
            <person name="Klaenhammer T."/>
            <person name="Richardson P."/>
            <person name="Kozyavkin S."/>
            <person name="Weimer B.C."/>
            <person name="Mills D.A."/>
        </authorList>
    </citation>
    <scope>NUCLEOTIDE SEQUENCE [LARGE SCALE GENOMIC DNA]</scope>
    <source>
        <strain>SK11</strain>
    </source>
</reference>
<evidence type="ECO:0000255" key="1">
    <source>
        <dbReference type="HAMAP-Rule" id="MF_01575"/>
    </source>
</evidence>
<name>Y544_LACLS</name>
<comment type="similarity">
    <text evidence="1">Belongs to the UPF0398 family.</text>
</comment>
<feature type="chain" id="PRO_1000069215" description="UPF0398 protein LACR_0544">
    <location>
        <begin position="1"/>
        <end position="174"/>
    </location>
</feature>
<dbReference type="EMBL" id="CP000425">
    <property type="protein sequence ID" value="ABJ72137.1"/>
    <property type="molecule type" value="Genomic_DNA"/>
</dbReference>
<dbReference type="RefSeq" id="WP_011675555.1">
    <property type="nucleotide sequence ID" value="NC_008527.1"/>
</dbReference>
<dbReference type="SMR" id="Q031I5"/>
<dbReference type="KEGG" id="llc:LACR_0544"/>
<dbReference type="HOGENOM" id="CLU_105319_0_0_9"/>
<dbReference type="Proteomes" id="UP000000240">
    <property type="component" value="Chromosome"/>
</dbReference>
<dbReference type="Gene3D" id="3.40.50.450">
    <property type="match status" value="1"/>
</dbReference>
<dbReference type="HAMAP" id="MF_01575">
    <property type="entry name" value="UPF0398"/>
    <property type="match status" value="1"/>
</dbReference>
<dbReference type="InterPro" id="IPR010697">
    <property type="entry name" value="YspA"/>
</dbReference>
<dbReference type="NCBIfam" id="NF010181">
    <property type="entry name" value="PRK13660.1"/>
    <property type="match status" value="1"/>
</dbReference>
<dbReference type="PANTHER" id="PTHR38440:SF1">
    <property type="entry name" value="UPF0398 PROTEIN SPR0331"/>
    <property type="match status" value="1"/>
</dbReference>
<dbReference type="PANTHER" id="PTHR38440">
    <property type="entry name" value="UPF0398 PROTEIN YPSA"/>
    <property type="match status" value="1"/>
</dbReference>
<dbReference type="Pfam" id="PF06908">
    <property type="entry name" value="YpsA"/>
    <property type="match status" value="1"/>
</dbReference>
<dbReference type="PIRSF" id="PIRSF021290">
    <property type="entry name" value="DUF1273"/>
    <property type="match status" value="1"/>
</dbReference>
<dbReference type="SUPFAM" id="SSF102405">
    <property type="entry name" value="MCP/YpsA-like"/>
    <property type="match status" value="1"/>
</dbReference>
<gene>
    <name type="ordered locus">LACR_0544</name>
</gene>
<accession>Q031I5</accession>
<proteinExistence type="inferred from homology"/>
<protein>
    <recommendedName>
        <fullName evidence="1">UPF0398 protein LACR_0544</fullName>
    </recommendedName>
</protein>
<organism>
    <name type="scientific">Lactococcus lactis subsp. cremoris (strain SK11)</name>
    <dbReference type="NCBI Taxonomy" id="272622"/>
    <lineage>
        <taxon>Bacteria</taxon>
        <taxon>Bacillati</taxon>
        <taxon>Bacillota</taxon>
        <taxon>Bacilli</taxon>
        <taxon>Lactobacillales</taxon>
        <taxon>Streptococcaceae</taxon>
        <taxon>Lactococcus</taxon>
        <taxon>Lactococcus cremoris subsp. cremoris</taxon>
    </lineage>
</organism>